<keyword id="KW-0030">Aminoacyl-tRNA synthetase</keyword>
<keyword id="KW-0067">ATP-binding</keyword>
<keyword id="KW-0963">Cytoplasm</keyword>
<keyword id="KW-0436">Ligase</keyword>
<keyword id="KW-0547">Nucleotide-binding</keyword>
<keyword id="KW-0648">Protein biosynthesis</keyword>
<evidence type="ECO:0000255" key="1">
    <source>
        <dbReference type="HAMAP-Rule" id="MF_00044"/>
    </source>
</evidence>
<protein>
    <recommendedName>
        <fullName evidence="1">Aspartate--tRNA(Asp/Asn) ligase</fullName>
        <ecNumber evidence="1">6.1.1.23</ecNumber>
    </recommendedName>
    <alternativeName>
        <fullName evidence="1">Aspartyl-tRNA synthetase</fullName>
        <shortName evidence="1">AspRS</shortName>
    </alternativeName>
    <alternativeName>
        <fullName evidence="1">Non-discriminating aspartyl-tRNA synthetase</fullName>
        <shortName evidence="1">ND-AspRS</shortName>
    </alternativeName>
</protein>
<feature type="chain" id="PRO_1000006724" description="Aspartate--tRNA(Asp/Asn) ligase">
    <location>
        <begin position="1"/>
        <end position="606"/>
    </location>
</feature>
<feature type="region of interest" description="Aspartate" evidence="1">
    <location>
        <begin position="201"/>
        <end position="204"/>
    </location>
</feature>
<feature type="binding site" evidence="1">
    <location>
        <position position="177"/>
    </location>
    <ligand>
        <name>L-aspartate</name>
        <dbReference type="ChEBI" id="CHEBI:29991"/>
    </ligand>
</feature>
<feature type="binding site" evidence="1">
    <location>
        <begin position="223"/>
        <end position="225"/>
    </location>
    <ligand>
        <name>ATP</name>
        <dbReference type="ChEBI" id="CHEBI:30616"/>
    </ligand>
</feature>
<feature type="binding site" evidence="1">
    <location>
        <position position="223"/>
    </location>
    <ligand>
        <name>L-aspartate</name>
        <dbReference type="ChEBI" id="CHEBI:29991"/>
    </ligand>
</feature>
<feature type="binding site" evidence="1">
    <location>
        <position position="232"/>
    </location>
    <ligand>
        <name>ATP</name>
        <dbReference type="ChEBI" id="CHEBI:30616"/>
    </ligand>
</feature>
<feature type="binding site" evidence="1">
    <location>
        <position position="461"/>
    </location>
    <ligand>
        <name>L-aspartate</name>
        <dbReference type="ChEBI" id="CHEBI:29991"/>
    </ligand>
</feature>
<feature type="binding site" evidence="1">
    <location>
        <position position="499"/>
    </location>
    <ligand>
        <name>ATP</name>
        <dbReference type="ChEBI" id="CHEBI:30616"/>
    </ligand>
</feature>
<feature type="binding site" evidence="1">
    <location>
        <position position="506"/>
    </location>
    <ligand>
        <name>L-aspartate</name>
        <dbReference type="ChEBI" id="CHEBI:29991"/>
    </ligand>
</feature>
<feature type="binding site" evidence="1">
    <location>
        <begin position="551"/>
        <end position="554"/>
    </location>
    <ligand>
        <name>ATP</name>
        <dbReference type="ChEBI" id="CHEBI:30616"/>
    </ligand>
</feature>
<feature type="site" description="Important for tRNA non-discrimination" evidence="1">
    <location>
        <position position="30"/>
    </location>
</feature>
<organism>
    <name type="scientific">Prochlorococcus marinus (strain MIT 9303)</name>
    <dbReference type="NCBI Taxonomy" id="59922"/>
    <lineage>
        <taxon>Bacteria</taxon>
        <taxon>Bacillati</taxon>
        <taxon>Cyanobacteriota</taxon>
        <taxon>Cyanophyceae</taxon>
        <taxon>Synechococcales</taxon>
        <taxon>Prochlorococcaceae</taxon>
        <taxon>Prochlorococcus</taxon>
    </lineage>
</organism>
<proteinExistence type="inferred from homology"/>
<sequence length="606" mass="67746">MRSNSCGELRSKHIASNVQLCGWVDRCRDHGGVIFIDLRDRSGTIQITVDPDQGAELFASAESLRNETVLQITGLVRPRPADAINSKLSTGEIEVLADGLEVLNPVTGNLPFTVSIHDEEPVKEELRLRHRHLDLRRERMSRNLQLRHTTIKTARRFLEDEGFIEVETPVLTRSTPEGARDYLVPSRVCSGEWFALPQSPQLFKQLLMVGGLERYYQVARCFRDEDLRADRQPEFTQLDIEMSFMDQEQILKLNERLIATIWKAVKGIDLPLPFPRLTWHEAMDRYGTDRPDTRYGMELNDVSDILKDMGFKVFSGAIAAGGSVKCITVPNGNDLISNVRIKPGGDIFNEAQKAGAGGLAFIRVRDSDEIDSIGAIKDNLNSKQKTALLKQTGAKAGDLILFGAGKTATVNSALDRVRQFLGRELGLIPTDQDNKLWQFLWVVDFPMFELNAEENRLEALHHPFCAPNKDDLGNDPDAWMERLPQARAQAYDLVLNGLELGGGSLRIHNAELQRQVLQTIGLPLEEANQQFGFLIDALEMGAPPHGGLAFGMDRIVMLLTGEDSIRDTIAFPKTQQARCLMTQAPAGVSNHQLEELHVESTWVDPE</sequence>
<dbReference type="EC" id="6.1.1.23" evidence="1"/>
<dbReference type="EMBL" id="CP000554">
    <property type="protein sequence ID" value="ABM79685.1"/>
    <property type="molecule type" value="Genomic_DNA"/>
</dbReference>
<dbReference type="RefSeq" id="WP_011827523.1">
    <property type="nucleotide sequence ID" value="NC_008820.1"/>
</dbReference>
<dbReference type="SMR" id="A2CDX5"/>
<dbReference type="STRING" id="59922.P9303_29551"/>
<dbReference type="KEGG" id="pmf:P9303_29551"/>
<dbReference type="HOGENOM" id="CLU_014330_3_2_3"/>
<dbReference type="BioCyc" id="PMAR59922:G1G80-2594-MONOMER"/>
<dbReference type="Proteomes" id="UP000002274">
    <property type="component" value="Chromosome"/>
</dbReference>
<dbReference type="GO" id="GO:0005737">
    <property type="term" value="C:cytoplasm"/>
    <property type="evidence" value="ECO:0007669"/>
    <property type="project" value="UniProtKB-SubCell"/>
</dbReference>
<dbReference type="GO" id="GO:0004815">
    <property type="term" value="F:aspartate-tRNA ligase activity"/>
    <property type="evidence" value="ECO:0007669"/>
    <property type="project" value="UniProtKB-UniRule"/>
</dbReference>
<dbReference type="GO" id="GO:0050560">
    <property type="term" value="F:aspartate-tRNA(Asn) ligase activity"/>
    <property type="evidence" value="ECO:0007669"/>
    <property type="project" value="UniProtKB-EC"/>
</dbReference>
<dbReference type="GO" id="GO:0005524">
    <property type="term" value="F:ATP binding"/>
    <property type="evidence" value="ECO:0007669"/>
    <property type="project" value="UniProtKB-UniRule"/>
</dbReference>
<dbReference type="GO" id="GO:0003676">
    <property type="term" value="F:nucleic acid binding"/>
    <property type="evidence" value="ECO:0007669"/>
    <property type="project" value="InterPro"/>
</dbReference>
<dbReference type="GO" id="GO:0006422">
    <property type="term" value="P:aspartyl-tRNA aminoacylation"/>
    <property type="evidence" value="ECO:0007669"/>
    <property type="project" value="UniProtKB-UniRule"/>
</dbReference>
<dbReference type="CDD" id="cd00777">
    <property type="entry name" value="AspRS_core"/>
    <property type="match status" value="1"/>
</dbReference>
<dbReference type="CDD" id="cd04317">
    <property type="entry name" value="EcAspRS_like_N"/>
    <property type="match status" value="1"/>
</dbReference>
<dbReference type="Gene3D" id="3.30.930.10">
    <property type="entry name" value="Bira Bifunctional Protein, Domain 2"/>
    <property type="match status" value="1"/>
</dbReference>
<dbReference type="Gene3D" id="3.30.1360.30">
    <property type="entry name" value="GAD-like domain"/>
    <property type="match status" value="1"/>
</dbReference>
<dbReference type="Gene3D" id="2.40.50.140">
    <property type="entry name" value="Nucleic acid-binding proteins"/>
    <property type="match status" value="1"/>
</dbReference>
<dbReference type="HAMAP" id="MF_00044">
    <property type="entry name" value="Asp_tRNA_synth_type1"/>
    <property type="match status" value="1"/>
</dbReference>
<dbReference type="InterPro" id="IPR004364">
    <property type="entry name" value="Aa-tRNA-synt_II"/>
</dbReference>
<dbReference type="InterPro" id="IPR006195">
    <property type="entry name" value="aa-tRNA-synth_II"/>
</dbReference>
<dbReference type="InterPro" id="IPR045864">
    <property type="entry name" value="aa-tRNA-synth_II/BPL/LPL"/>
</dbReference>
<dbReference type="InterPro" id="IPR004524">
    <property type="entry name" value="Asp-tRNA-ligase_1"/>
</dbReference>
<dbReference type="InterPro" id="IPR047089">
    <property type="entry name" value="Asp-tRNA-ligase_1_N"/>
</dbReference>
<dbReference type="InterPro" id="IPR002312">
    <property type="entry name" value="Asp/Asn-tRNA-synth_IIb"/>
</dbReference>
<dbReference type="InterPro" id="IPR047090">
    <property type="entry name" value="AspRS_core"/>
</dbReference>
<dbReference type="InterPro" id="IPR004115">
    <property type="entry name" value="GAD-like_sf"/>
</dbReference>
<dbReference type="InterPro" id="IPR029351">
    <property type="entry name" value="GAD_dom"/>
</dbReference>
<dbReference type="InterPro" id="IPR012340">
    <property type="entry name" value="NA-bd_OB-fold"/>
</dbReference>
<dbReference type="InterPro" id="IPR004365">
    <property type="entry name" value="NA-bd_OB_tRNA"/>
</dbReference>
<dbReference type="NCBIfam" id="TIGR00459">
    <property type="entry name" value="aspS_bact"/>
    <property type="match status" value="1"/>
</dbReference>
<dbReference type="NCBIfam" id="NF001750">
    <property type="entry name" value="PRK00476.1"/>
    <property type="match status" value="1"/>
</dbReference>
<dbReference type="PANTHER" id="PTHR22594:SF5">
    <property type="entry name" value="ASPARTATE--TRNA LIGASE, MITOCHONDRIAL"/>
    <property type="match status" value="1"/>
</dbReference>
<dbReference type="PANTHER" id="PTHR22594">
    <property type="entry name" value="ASPARTYL/LYSYL-TRNA SYNTHETASE"/>
    <property type="match status" value="1"/>
</dbReference>
<dbReference type="Pfam" id="PF02938">
    <property type="entry name" value="GAD"/>
    <property type="match status" value="1"/>
</dbReference>
<dbReference type="Pfam" id="PF00152">
    <property type="entry name" value="tRNA-synt_2"/>
    <property type="match status" value="1"/>
</dbReference>
<dbReference type="Pfam" id="PF01336">
    <property type="entry name" value="tRNA_anti-codon"/>
    <property type="match status" value="1"/>
</dbReference>
<dbReference type="PRINTS" id="PR01042">
    <property type="entry name" value="TRNASYNTHASP"/>
</dbReference>
<dbReference type="SUPFAM" id="SSF55681">
    <property type="entry name" value="Class II aaRS and biotin synthetases"/>
    <property type="match status" value="1"/>
</dbReference>
<dbReference type="SUPFAM" id="SSF55261">
    <property type="entry name" value="GAD domain-like"/>
    <property type="match status" value="1"/>
</dbReference>
<dbReference type="SUPFAM" id="SSF50249">
    <property type="entry name" value="Nucleic acid-binding proteins"/>
    <property type="match status" value="1"/>
</dbReference>
<dbReference type="PROSITE" id="PS50862">
    <property type="entry name" value="AA_TRNA_LIGASE_II"/>
    <property type="match status" value="1"/>
</dbReference>
<gene>
    <name evidence="1" type="primary">aspS</name>
    <name type="ordered locus">P9303_29551</name>
</gene>
<reference key="1">
    <citation type="journal article" date="2007" name="PLoS Genet.">
        <title>Patterns and implications of gene gain and loss in the evolution of Prochlorococcus.</title>
        <authorList>
            <person name="Kettler G.C."/>
            <person name="Martiny A.C."/>
            <person name="Huang K."/>
            <person name="Zucker J."/>
            <person name="Coleman M.L."/>
            <person name="Rodrigue S."/>
            <person name="Chen F."/>
            <person name="Lapidus A."/>
            <person name="Ferriera S."/>
            <person name="Johnson J."/>
            <person name="Steglich C."/>
            <person name="Church G.M."/>
            <person name="Richardson P."/>
            <person name="Chisholm S.W."/>
        </authorList>
    </citation>
    <scope>NUCLEOTIDE SEQUENCE [LARGE SCALE GENOMIC DNA]</scope>
    <source>
        <strain>MIT 9303</strain>
    </source>
</reference>
<name>SYDND_PROM3</name>
<comment type="function">
    <text evidence="1">Aspartyl-tRNA synthetase with relaxed tRNA specificity since it is able to aspartylate not only its cognate tRNA(Asp) but also tRNA(Asn). Reaction proceeds in two steps: L-aspartate is first activated by ATP to form Asp-AMP and then transferred to the acceptor end of tRNA(Asp/Asn).</text>
</comment>
<comment type="catalytic activity">
    <reaction evidence="1">
        <text>tRNA(Asx) + L-aspartate + ATP = L-aspartyl-tRNA(Asx) + AMP + diphosphate</text>
        <dbReference type="Rhea" id="RHEA:18349"/>
        <dbReference type="Rhea" id="RHEA-COMP:9710"/>
        <dbReference type="Rhea" id="RHEA-COMP:9711"/>
        <dbReference type="ChEBI" id="CHEBI:29991"/>
        <dbReference type="ChEBI" id="CHEBI:30616"/>
        <dbReference type="ChEBI" id="CHEBI:33019"/>
        <dbReference type="ChEBI" id="CHEBI:78442"/>
        <dbReference type="ChEBI" id="CHEBI:78516"/>
        <dbReference type="ChEBI" id="CHEBI:456215"/>
        <dbReference type="EC" id="6.1.1.23"/>
    </reaction>
</comment>
<comment type="subunit">
    <text evidence="1">Homodimer.</text>
</comment>
<comment type="subcellular location">
    <subcellularLocation>
        <location evidence="1">Cytoplasm</location>
    </subcellularLocation>
</comment>
<comment type="similarity">
    <text evidence="1">Belongs to the class-II aminoacyl-tRNA synthetase family. Type 1 subfamily.</text>
</comment>
<accession>A2CDX5</accession>